<sequence>MAAPVCVNIQMLLEAAEYLERREREAEHGYASMLPYNSKERDGLKRKSKSKKSSNSRSTHNEMEKNRRAHLRLCLEKLKILVPLGPESNRHTTLSLLTRAKSHIKKLEDCDKRSLHQIEQLQREQRHLKRQLEKFGVERTRMDSIGSAMSSERSDSDREEIDVDVESTDYLTADLDWSSSSSSVSDLDERGSMQSICSDEGYSSSGLKRIELQDNPKITAL</sequence>
<name>MAD1_XENTR</name>
<keyword id="KW-0238">DNA-binding</keyword>
<keyword id="KW-0539">Nucleus</keyword>
<keyword id="KW-1185">Reference proteome</keyword>
<keyword id="KW-0678">Repressor</keyword>
<keyword id="KW-0804">Transcription</keyword>
<keyword id="KW-0805">Transcription regulation</keyword>
<dbReference type="EMBL" id="BC118812">
    <property type="protein sequence ID" value="AAI18813.1"/>
    <property type="molecule type" value="mRNA"/>
</dbReference>
<dbReference type="RefSeq" id="NP_001072228.1">
    <property type="nucleotide sequence ID" value="NM_001078760.1"/>
</dbReference>
<dbReference type="SMR" id="Q0VFI9"/>
<dbReference type="FunCoup" id="Q0VFI9">
    <property type="interactions" value="1780"/>
</dbReference>
<dbReference type="STRING" id="8364.ENSXETP00000028139"/>
<dbReference type="DNASU" id="779675"/>
<dbReference type="GeneID" id="779675"/>
<dbReference type="KEGG" id="xtr:779675"/>
<dbReference type="AGR" id="Xenbase:XB-GENE-943715"/>
<dbReference type="CTD" id="4084"/>
<dbReference type="Xenbase" id="XB-GENE-943715">
    <property type="gene designation" value="mxd1"/>
</dbReference>
<dbReference type="eggNOG" id="KOG2483">
    <property type="taxonomic scope" value="Eukaryota"/>
</dbReference>
<dbReference type="InParanoid" id="Q0VFI9"/>
<dbReference type="OMA" id="SSTHNEM"/>
<dbReference type="OrthoDB" id="5920083at2759"/>
<dbReference type="Proteomes" id="UP000008143">
    <property type="component" value="Chromosome 3"/>
</dbReference>
<dbReference type="Bgee" id="ENSXETG00000033966">
    <property type="expression patterns" value="Expressed in testis and 12 other cell types or tissues"/>
</dbReference>
<dbReference type="GO" id="GO:0005634">
    <property type="term" value="C:nucleus"/>
    <property type="evidence" value="ECO:0007669"/>
    <property type="project" value="UniProtKB-SubCell"/>
</dbReference>
<dbReference type="GO" id="GO:0003677">
    <property type="term" value="F:DNA binding"/>
    <property type="evidence" value="ECO:0007669"/>
    <property type="project" value="UniProtKB-KW"/>
</dbReference>
<dbReference type="GO" id="GO:0046983">
    <property type="term" value="F:protein dimerization activity"/>
    <property type="evidence" value="ECO:0007669"/>
    <property type="project" value="InterPro"/>
</dbReference>
<dbReference type="GO" id="GO:0000122">
    <property type="term" value="P:negative regulation of transcription by RNA polymerase II"/>
    <property type="evidence" value="ECO:0007669"/>
    <property type="project" value="InterPro"/>
</dbReference>
<dbReference type="CDD" id="cd18931">
    <property type="entry name" value="bHLHzip_Mad1"/>
    <property type="match status" value="1"/>
</dbReference>
<dbReference type="FunFam" id="4.10.280.10:FF:000014">
    <property type="entry name" value="Max dimerization protein 1"/>
    <property type="match status" value="1"/>
</dbReference>
<dbReference type="Gene3D" id="4.10.280.10">
    <property type="entry name" value="Helix-loop-helix DNA-binding domain"/>
    <property type="match status" value="1"/>
</dbReference>
<dbReference type="InterPro" id="IPR011598">
    <property type="entry name" value="bHLH_dom"/>
</dbReference>
<dbReference type="InterPro" id="IPR036638">
    <property type="entry name" value="HLH_DNA-bd_sf"/>
</dbReference>
<dbReference type="InterPro" id="IPR040157">
    <property type="entry name" value="MXD1_bHLHzip"/>
</dbReference>
<dbReference type="PANTHER" id="PTHR11969:SF18">
    <property type="entry name" value="MAX DIMERIZATION PROTEIN 1"/>
    <property type="match status" value="1"/>
</dbReference>
<dbReference type="PANTHER" id="PTHR11969">
    <property type="entry name" value="MAX DIMERIZATION, MAD"/>
    <property type="match status" value="1"/>
</dbReference>
<dbReference type="Pfam" id="PF00010">
    <property type="entry name" value="HLH"/>
    <property type="match status" value="1"/>
</dbReference>
<dbReference type="SMART" id="SM00353">
    <property type="entry name" value="HLH"/>
    <property type="match status" value="1"/>
</dbReference>
<dbReference type="SUPFAM" id="SSF47459">
    <property type="entry name" value="HLH, helix-loop-helix DNA-binding domain"/>
    <property type="match status" value="1"/>
</dbReference>
<dbReference type="PROSITE" id="PS50888">
    <property type="entry name" value="BHLH"/>
    <property type="match status" value="1"/>
</dbReference>
<organism>
    <name type="scientific">Xenopus tropicalis</name>
    <name type="common">Western clawed frog</name>
    <name type="synonym">Silurana tropicalis</name>
    <dbReference type="NCBI Taxonomy" id="8364"/>
    <lineage>
        <taxon>Eukaryota</taxon>
        <taxon>Metazoa</taxon>
        <taxon>Chordata</taxon>
        <taxon>Craniata</taxon>
        <taxon>Vertebrata</taxon>
        <taxon>Euteleostomi</taxon>
        <taxon>Amphibia</taxon>
        <taxon>Batrachia</taxon>
        <taxon>Anura</taxon>
        <taxon>Pipoidea</taxon>
        <taxon>Pipidae</taxon>
        <taxon>Xenopodinae</taxon>
        <taxon>Xenopus</taxon>
        <taxon>Silurana</taxon>
    </lineage>
</organism>
<feature type="chain" id="PRO_0000253706" description="Max dimerization protein 1">
    <location>
        <begin position="1"/>
        <end position="221"/>
    </location>
</feature>
<feature type="domain" description="bHLH" evidence="3">
    <location>
        <begin position="55"/>
        <end position="107"/>
    </location>
</feature>
<feature type="region of interest" description="Disordered" evidence="4">
    <location>
        <begin position="28"/>
        <end position="67"/>
    </location>
</feature>
<feature type="region of interest" description="Disordered" evidence="4">
    <location>
        <begin position="176"/>
        <end position="202"/>
    </location>
</feature>
<feature type="short sequence motif" description="Nuclear localization signal" evidence="2">
    <location>
        <begin position="21"/>
        <end position="49"/>
    </location>
</feature>
<feature type="compositionally biased region" description="Polar residues" evidence="4">
    <location>
        <begin position="192"/>
        <end position="202"/>
    </location>
</feature>
<protein>
    <recommendedName>
        <fullName>Max dimerization protein 1</fullName>
        <shortName>Max dimerizer 1</shortName>
    </recommendedName>
    <alternativeName>
        <fullName>Protein MAD</fullName>
    </alternativeName>
</protein>
<reference key="1">
    <citation type="submission" date="2006-07" db="EMBL/GenBank/DDBJ databases">
        <authorList>
            <consortium name="NIH - Xenopus Gene Collection (XGC) project"/>
        </authorList>
    </citation>
    <scope>NUCLEOTIDE SEQUENCE [LARGE SCALE MRNA]</scope>
    <source>
        <tissue>Testis</tissue>
    </source>
</reference>
<proteinExistence type="evidence at transcript level"/>
<comment type="function">
    <text evidence="1">Transcriptional repressor. MAD binds with MAX to form a sequence-specific DNA-binding protein complex which recognizes the core sequence 5'-CAC[GA]TG-3'. MAD thus antagonizes MYC transcriptional activity by competing for MAX (By similarity).</text>
</comment>
<comment type="subunit">
    <text evidence="1">Efficient DNA binding requires dimerization with another bHLH protein. Binds DNA as a heterodimer with MAX (By similarity).</text>
</comment>
<comment type="subcellular location">
    <subcellularLocation>
        <location evidence="3">Nucleus</location>
    </subcellularLocation>
</comment>
<accession>Q0VFI9</accession>
<gene>
    <name type="primary">mxd1</name>
    <name type="synonym">mad1</name>
</gene>
<evidence type="ECO:0000250" key="1"/>
<evidence type="ECO:0000255" key="2"/>
<evidence type="ECO:0000255" key="3">
    <source>
        <dbReference type="PROSITE-ProRule" id="PRU00981"/>
    </source>
</evidence>
<evidence type="ECO:0000256" key="4">
    <source>
        <dbReference type="SAM" id="MobiDB-lite"/>
    </source>
</evidence>